<gene>
    <name evidence="1" type="primary">ftsQ</name>
    <name type="ordered locus">CC_2542</name>
</gene>
<feature type="chain" id="PRO_0000160578" description="Cell division protein FtsQ">
    <location>
        <begin position="1"/>
        <end position="302"/>
    </location>
</feature>
<feature type="topological domain" description="Cytoplasmic" evidence="1">
    <location>
        <begin position="1"/>
        <end position="50"/>
    </location>
</feature>
<feature type="transmembrane region" description="Helical" evidence="1">
    <location>
        <begin position="51"/>
        <end position="71"/>
    </location>
</feature>
<feature type="topological domain" description="Periplasmic" evidence="1">
    <location>
        <begin position="72"/>
        <end position="302"/>
    </location>
</feature>
<feature type="domain" description="POTRA" evidence="2">
    <location>
        <begin position="94"/>
        <end position="162"/>
    </location>
</feature>
<feature type="region of interest" description="Disordered" evidence="3">
    <location>
        <begin position="1"/>
        <end position="41"/>
    </location>
</feature>
<feature type="compositionally biased region" description="Low complexity" evidence="3">
    <location>
        <begin position="18"/>
        <end position="38"/>
    </location>
</feature>
<organism>
    <name type="scientific">Caulobacter vibrioides (strain ATCC 19089 / CIP 103742 / CB 15)</name>
    <name type="common">Caulobacter crescentus</name>
    <dbReference type="NCBI Taxonomy" id="190650"/>
    <lineage>
        <taxon>Bacteria</taxon>
        <taxon>Pseudomonadati</taxon>
        <taxon>Pseudomonadota</taxon>
        <taxon>Alphaproteobacteria</taxon>
        <taxon>Caulobacterales</taxon>
        <taxon>Caulobacteraceae</taxon>
        <taxon>Caulobacter</taxon>
    </lineage>
</organism>
<name>FTSQ_CAUVC</name>
<proteinExistence type="inferred from homology"/>
<protein>
    <recommendedName>
        <fullName evidence="1">Cell division protein FtsQ</fullName>
    </recommendedName>
</protein>
<reference key="1">
    <citation type="journal article" date="2001" name="Proc. Natl. Acad. Sci. U.S.A.">
        <title>Complete genome sequence of Caulobacter crescentus.</title>
        <authorList>
            <person name="Nierman W.C."/>
            <person name="Feldblyum T.V."/>
            <person name="Laub M.T."/>
            <person name="Paulsen I.T."/>
            <person name="Nelson K.E."/>
            <person name="Eisen J.A."/>
            <person name="Heidelberg J.F."/>
            <person name="Alley M.R.K."/>
            <person name="Ohta N."/>
            <person name="Maddock J.R."/>
            <person name="Potocka I."/>
            <person name="Nelson W.C."/>
            <person name="Newton A."/>
            <person name="Stephens C."/>
            <person name="Phadke N.D."/>
            <person name="Ely B."/>
            <person name="DeBoy R.T."/>
            <person name="Dodson R.J."/>
            <person name="Durkin A.S."/>
            <person name="Gwinn M.L."/>
            <person name="Haft D.H."/>
            <person name="Kolonay J.F."/>
            <person name="Smit J."/>
            <person name="Craven M.B."/>
            <person name="Khouri H.M."/>
            <person name="Shetty J."/>
            <person name="Berry K.J."/>
            <person name="Utterback T.R."/>
            <person name="Tran K."/>
            <person name="Wolf A.M."/>
            <person name="Vamathevan J.J."/>
            <person name="Ermolaeva M.D."/>
            <person name="White O."/>
            <person name="Salzberg S.L."/>
            <person name="Venter J.C."/>
            <person name="Shapiro L."/>
            <person name="Fraser C.M."/>
        </authorList>
    </citation>
    <scope>NUCLEOTIDE SEQUENCE [LARGE SCALE GENOMIC DNA]</scope>
    <source>
        <strain>ATCC 19089 / CIP 103742 / CB 15</strain>
    </source>
</reference>
<comment type="function">
    <text evidence="1">Essential cell division protein.</text>
</comment>
<comment type="subcellular location">
    <subcellularLocation>
        <location evidence="1">Cell inner membrane</location>
        <topology evidence="1">Single-pass type II membrane protein</topology>
    </subcellularLocation>
    <text evidence="1">Localizes to the division septum.</text>
</comment>
<comment type="similarity">
    <text evidence="1">Belongs to the FtsQ/DivIB family. FtsQ subfamily.</text>
</comment>
<comment type="sequence caution" evidence="4">
    <conflict type="erroneous initiation">
        <sequence resource="EMBL-CDS" id="AAK24513"/>
    </conflict>
    <text>Truncated N-terminus.</text>
</comment>
<sequence>MPAVVRGGPPKPRRPRAEAPASPSKGKPAPRKAQPAAKLHAARGVGLSPTVALSVAGAALGLGLVVMLATGHRAERLGASMVRGVDNTFASAGFRLKTVHIRGASATAQADILKASGLYLDQPTLGMDLADVRDRVQGVGWVKDAKVVRMLPDTVLIAVEERPALAVWQNHGRMKVIDSEGQVITEADPARFPQLPLVVGQGADQAAGLILPAVASRPRLRDRLEAMVRVDERRWDLRLKDGSLIQLPAIDEESALIQLDQLDQRQRILDMGFARIDLRDPEMVAVRPRDAVLPGQPAADGA</sequence>
<keyword id="KW-0131">Cell cycle</keyword>
<keyword id="KW-0132">Cell division</keyword>
<keyword id="KW-0997">Cell inner membrane</keyword>
<keyword id="KW-1003">Cell membrane</keyword>
<keyword id="KW-0472">Membrane</keyword>
<keyword id="KW-1185">Reference proteome</keyword>
<keyword id="KW-0812">Transmembrane</keyword>
<keyword id="KW-1133">Transmembrane helix</keyword>
<accession>P0CAU8</accession>
<accession>O68326</accession>
<evidence type="ECO:0000255" key="1">
    <source>
        <dbReference type="HAMAP-Rule" id="MF_00911"/>
    </source>
</evidence>
<evidence type="ECO:0000255" key="2">
    <source>
        <dbReference type="PROSITE-ProRule" id="PRU01115"/>
    </source>
</evidence>
<evidence type="ECO:0000256" key="3">
    <source>
        <dbReference type="SAM" id="MobiDB-lite"/>
    </source>
</evidence>
<evidence type="ECO:0000305" key="4"/>
<dbReference type="EMBL" id="AE005673">
    <property type="protein sequence ID" value="AAK24513.1"/>
    <property type="status" value="ALT_INIT"/>
    <property type="molecule type" value="Genomic_DNA"/>
</dbReference>
<dbReference type="PIR" id="E87564">
    <property type="entry name" value="E87564"/>
</dbReference>
<dbReference type="RefSeq" id="NP_421345.1">
    <property type="nucleotide sequence ID" value="NC_002696.2"/>
</dbReference>
<dbReference type="RefSeq" id="WP_012640522.1">
    <property type="nucleotide sequence ID" value="NC_002696.2"/>
</dbReference>
<dbReference type="SMR" id="P0CAU8"/>
<dbReference type="STRING" id="190650.CC_2542"/>
<dbReference type="EnsemblBacteria" id="AAK24513">
    <property type="protein sequence ID" value="AAK24513"/>
    <property type="gene ID" value="CC_2542"/>
</dbReference>
<dbReference type="KEGG" id="ccr:CC_2542"/>
<dbReference type="PATRIC" id="fig|190650.5.peg.2556"/>
<dbReference type="eggNOG" id="COG1589">
    <property type="taxonomic scope" value="Bacteria"/>
</dbReference>
<dbReference type="HOGENOM" id="CLU_061141_1_1_5"/>
<dbReference type="Proteomes" id="UP000001816">
    <property type="component" value="Chromosome"/>
</dbReference>
<dbReference type="GO" id="GO:0032153">
    <property type="term" value="C:cell division site"/>
    <property type="evidence" value="ECO:0007669"/>
    <property type="project" value="UniProtKB-UniRule"/>
</dbReference>
<dbReference type="GO" id="GO:0005886">
    <property type="term" value="C:plasma membrane"/>
    <property type="evidence" value="ECO:0007669"/>
    <property type="project" value="UniProtKB-SubCell"/>
</dbReference>
<dbReference type="GO" id="GO:0090529">
    <property type="term" value="P:cell septum assembly"/>
    <property type="evidence" value="ECO:0007669"/>
    <property type="project" value="InterPro"/>
</dbReference>
<dbReference type="GO" id="GO:0043093">
    <property type="term" value="P:FtsZ-dependent cytokinesis"/>
    <property type="evidence" value="ECO:0007669"/>
    <property type="project" value="UniProtKB-UniRule"/>
</dbReference>
<dbReference type="Gene3D" id="3.10.20.310">
    <property type="entry name" value="membrane protein fhac"/>
    <property type="match status" value="1"/>
</dbReference>
<dbReference type="HAMAP" id="MF_00911">
    <property type="entry name" value="FtsQ_subfam"/>
    <property type="match status" value="1"/>
</dbReference>
<dbReference type="InterPro" id="IPR005548">
    <property type="entry name" value="Cell_div_FtsQ/DivIB_C"/>
</dbReference>
<dbReference type="InterPro" id="IPR026579">
    <property type="entry name" value="FtsQ"/>
</dbReference>
<dbReference type="InterPro" id="IPR034746">
    <property type="entry name" value="POTRA"/>
</dbReference>
<dbReference type="InterPro" id="IPR013685">
    <property type="entry name" value="POTRA_FtsQ_type"/>
</dbReference>
<dbReference type="PANTHER" id="PTHR35851">
    <property type="entry name" value="CELL DIVISION PROTEIN FTSQ"/>
    <property type="match status" value="1"/>
</dbReference>
<dbReference type="PANTHER" id="PTHR35851:SF1">
    <property type="entry name" value="CELL DIVISION PROTEIN FTSQ"/>
    <property type="match status" value="1"/>
</dbReference>
<dbReference type="Pfam" id="PF03799">
    <property type="entry name" value="FtsQ_DivIB_C"/>
    <property type="match status" value="1"/>
</dbReference>
<dbReference type="Pfam" id="PF08478">
    <property type="entry name" value="POTRA_1"/>
    <property type="match status" value="1"/>
</dbReference>
<dbReference type="PROSITE" id="PS51779">
    <property type="entry name" value="POTRA"/>
    <property type="match status" value="1"/>
</dbReference>